<accession>P61299</accession>
<accession>P31885</accession>
<comment type="function">
    <text>Somatostatin inhibits the release of somatotropin.</text>
</comment>
<comment type="subcellular location">
    <subcellularLocation>
        <location>Secreted</location>
    </subcellularLocation>
</comment>
<comment type="similarity">
    <text evidence="2">Belongs to the somatostatin family.</text>
</comment>
<sequence>AGCKNFFWKTFTSC</sequence>
<feature type="peptide" id="PRO_0000044370" description="Somatostatin-14">
    <location>
        <begin position="1"/>
        <end position="14"/>
    </location>
</feature>
<feature type="disulfide bond" evidence="1">
    <location>
        <begin position="3"/>
        <end position="14"/>
    </location>
</feature>
<dbReference type="PIR" id="C60414">
    <property type="entry name" value="C60414"/>
</dbReference>
<dbReference type="GO" id="GO:0005576">
    <property type="term" value="C:extracellular region"/>
    <property type="evidence" value="ECO:0007669"/>
    <property type="project" value="UniProtKB-SubCell"/>
</dbReference>
<dbReference type="GO" id="GO:0005179">
    <property type="term" value="F:hormone activity"/>
    <property type="evidence" value="ECO:0007669"/>
    <property type="project" value="UniProtKB-KW"/>
</dbReference>
<dbReference type="InterPro" id="IPR018142">
    <property type="entry name" value="Somatostatin/Cortistatin_C"/>
</dbReference>
<dbReference type="Pfam" id="PF03002">
    <property type="entry name" value="Somatostatin"/>
    <property type="match status" value="1"/>
</dbReference>
<proteinExistence type="evidence at protein level"/>
<organism>
    <name type="scientific">Trachemys scripta</name>
    <name type="common">Red-eared slider turtle</name>
    <name type="synonym">Pseudemys scripta</name>
    <dbReference type="NCBI Taxonomy" id="34903"/>
    <lineage>
        <taxon>Eukaryota</taxon>
        <taxon>Metazoa</taxon>
        <taxon>Chordata</taxon>
        <taxon>Craniata</taxon>
        <taxon>Vertebrata</taxon>
        <taxon>Euteleostomi</taxon>
        <taxon>Archelosauria</taxon>
        <taxon>Testudinata</taxon>
        <taxon>Testudines</taxon>
        <taxon>Cryptodira</taxon>
        <taxon>Durocryptodira</taxon>
        <taxon>Testudinoidea</taxon>
        <taxon>Emydidae</taxon>
        <taxon>Trachemys</taxon>
    </lineage>
</organism>
<evidence type="ECO:0000250" key="1"/>
<evidence type="ECO:0000305" key="2"/>
<name>SMS_TRASC</name>
<gene>
    <name type="primary">SST</name>
</gene>
<protein>
    <recommendedName>
        <fullName>Somatostatin-14</fullName>
    </recommendedName>
</protein>
<reference key="1">
    <citation type="journal article" date="1990" name="Peptides">
        <title>Isolation and structural characterization of insulin, glucagon and somatostatin from the turtle, Pseudemys scripta.</title>
        <authorList>
            <person name="Conlon J.M."/>
            <person name="Hicks J.W."/>
        </authorList>
    </citation>
    <scope>PROTEIN SEQUENCE</scope>
</reference>
<keyword id="KW-0903">Direct protein sequencing</keyword>
<keyword id="KW-1015">Disulfide bond</keyword>
<keyword id="KW-0372">Hormone</keyword>
<keyword id="KW-0964">Secreted</keyword>